<reference key="1">
    <citation type="submission" date="2005-06" db="EMBL/GenBank/DDBJ databases">
        <title>DNA sequences of macaque genes expressed in brain or testis and its evolutionary implications.</title>
        <authorList>
            <consortium name="International consortium for macaque cDNA sequencing and analysis"/>
        </authorList>
    </citation>
    <scope>NUCLEOTIDE SEQUENCE [LARGE SCALE MRNA]</scope>
    <source>
        <tissue>Testis</tissue>
    </source>
</reference>
<protein>
    <recommendedName>
        <fullName>THAP domain-containing protein 5</fullName>
    </recommendedName>
</protein>
<gene>
    <name type="primary">THAP5</name>
    <name type="ORF">QtsA-14855</name>
</gene>
<keyword id="KW-0131">Cell cycle</keyword>
<keyword id="KW-0175">Coiled coil</keyword>
<keyword id="KW-0238">DNA-binding</keyword>
<keyword id="KW-0479">Metal-binding</keyword>
<keyword id="KW-0539">Nucleus</keyword>
<keyword id="KW-1185">Reference proteome</keyword>
<keyword id="KW-0678">Repressor</keyword>
<keyword id="KW-0804">Transcription</keyword>
<keyword id="KW-0805">Transcription regulation</keyword>
<keyword id="KW-0862">Zinc</keyword>
<keyword id="KW-0863">Zinc-finger</keyword>
<comment type="function">
    <text evidence="2">Has sequence-specific DNA-binding activity and can function as transcriptional repressor (in vitro). May be a regulator of cell cycle: THAP5 overexpression in human cell lines causes cell cycle arrest at G2/M phase.</text>
</comment>
<comment type="subunit">
    <text evidence="2">Interacts with HTRA2; under apoptotic conditions. Interacts with ABRAXAS2.</text>
</comment>
<comment type="subcellular location">
    <subcellularLocation>
        <location evidence="2">Nucleus</location>
    </subcellularLocation>
</comment>
<comment type="PTM">
    <text evidence="2">Cleaved by HTRA2 during apoptosis.</text>
</comment>
<comment type="caution">
    <text evidence="6">It is uncertain whether Met-1 or Met-2 is the initiator.</text>
</comment>
<accession>Q4R7M0</accession>
<dbReference type="EMBL" id="AB168795">
    <property type="protein sequence ID" value="BAE00902.1"/>
    <property type="molecule type" value="mRNA"/>
</dbReference>
<dbReference type="RefSeq" id="NP_001271042.1">
    <property type="nucleotide sequence ID" value="NM_001284113.1"/>
</dbReference>
<dbReference type="SMR" id="Q4R7M0"/>
<dbReference type="STRING" id="9541.ENSMFAP00000020187"/>
<dbReference type="eggNOG" id="ENOG502RYVM">
    <property type="taxonomic scope" value="Eukaryota"/>
</dbReference>
<dbReference type="Proteomes" id="UP000233100">
    <property type="component" value="Unplaced"/>
</dbReference>
<dbReference type="GO" id="GO:0005634">
    <property type="term" value="C:nucleus"/>
    <property type="evidence" value="ECO:0000250"/>
    <property type="project" value="UniProtKB"/>
</dbReference>
<dbReference type="GO" id="GO:0003677">
    <property type="term" value="F:DNA binding"/>
    <property type="evidence" value="ECO:0007669"/>
    <property type="project" value="UniProtKB-KW"/>
</dbReference>
<dbReference type="GO" id="GO:0008270">
    <property type="term" value="F:zinc ion binding"/>
    <property type="evidence" value="ECO:0007669"/>
    <property type="project" value="UniProtKB-KW"/>
</dbReference>
<dbReference type="GO" id="GO:0045786">
    <property type="term" value="P:negative regulation of cell cycle"/>
    <property type="evidence" value="ECO:0000250"/>
    <property type="project" value="UniProtKB"/>
</dbReference>
<dbReference type="InterPro" id="IPR052224">
    <property type="entry name" value="THAP_domain_protein"/>
</dbReference>
<dbReference type="InterPro" id="IPR006612">
    <property type="entry name" value="THAP_Znf"/>
</dbReference>
<dbReference type="PANTHER" id="PTHR46927">
    <property type="entry name" value="AGAP005574-PA"/>
    <property type="match status" value="1"/>
</dbReference>
<dbReference type="PANTHER" id="PTHR46927:SF1">
    <property type="entry name" value="THAP DOMAIN-CONTAINING PROTEIN 5"/>
    <property type="match status" value="1"/>
</dbReference>
<dbReference type="Pfam" id="PF05485">
    <property type="entry name" value="THAP"/>
    <property type="match status" value="1"/>
</dbReference>
<dbReference type="SMART" id="SM00692">
    <property type="entry name" value="DM3"/>
    <property type="match status" value="1"/>
</dbReference>
<dbReference type="SMART" id="SM00980">
    <property type="entry name" value="THAP"/>
    <property type="match status" value="1"/>
</dbReference>
<dbReference type="SUPFAM" id="SSF57716">
    <property type="entry name" value="Glucocorticoid receptor-like (DNA-binding domain)"/>
    <property type="match status" value="1"/>
</dbReference>
<dbReference type="PROSITE" id="PS50950">
    <property type="entry name" value="ZF_THAP"/>
    <property type="match status" value="1"/>
</dbReference>
<organism>
    <name type="scientific">Macaca fascicularis</name>
    <name type="common">Crab-eating macaque</name>
    <name type="synonym">Cynomolgus monkey</name>
    <dbReference type="NCBI Taxonomy" id="9541"/>
    <lineage>
        <taxon>Eukaryota</taxon>
        <taxon>Metazoa</taxon>
        <taxon>Chordata</taxon>
        <taxon>Craniata</taxon>
        <taxon>Vertebrata</taxon>
        <taxon>Euteleostomi</taxon>
        <taxon>Mammalia</taxon>
        <taxon>Eutheria</taxon>
        <taxon>Euarchontoglires</taxon>
        <taxon>Primates</taxon>
        <taxon>Haplorrhini</taxon>
        <taxon>Catarrhini</taxon>
        <taxon>Cercopithecidae</taxon>
        <taxon>Cercopithecinae</taxon>
        <taxon>Macaca</taxon>
    </lineage>
</organism>
<name>THAP5_MACFA</name>
<feature type="chain" id="PRO_0000333818" description="THAP domain-containing protein 5">
    <location>
        <begin position="1"/>
        <end position="396"/>
    </location>
</feature>
<feature type="zinc finger region" description="THAP-type" evidence="4">
    <location>
        <begin position="2"/>
        <end position="85"/>
    </location>
</feature>
<feature type="region of interest" description="Disordered" evidence="5">
    <location>
        <begin position="86"/>
        <end position="113"/>
    </location>
</feature>
<feature type="coiled-coil region" evidence="3">
    <location>
        <begin position="349"/>
        <end position="382"/>
    </location>
</feature>
<feature type="short sequence motif" description="HCFC1-binding motif (HBM)" evidence="1">
    <location>
        <begin position="322"/>
        <end position="325"/>
    </location>
</feature>
<feature type="compositionally biased region" description="Basic and acidic residues" evidence="5">
    <location>
        <begin position="91"/>
        <end position="113"/>
    </location>
</feature>
<evidence type="ECO:0000250" key="1"/>
<evidence type="ECO:0000250" key="2">
    <source>
        <dbReference type="UniProtKB" id="Q7Z6K1"/>
    </source>
</evidence>
<evidence type="ECO:0000255" key="3"/>
<evidence type="ECO:0000255" key="4">
    <source>
        <dbReference type="PROSITE-ProRule" id="PRU00309"/>
    </source>
</evidence>
<evidence type="ECO:0000256" key="5">
    <source>
        <dbReference type="SAM" id="MobiDB-lite"/>
    </source>
</evidence>
<evidence type="ECO:0000305" key="6"/>
<sequence>MMPRYCAAICCKNRRGRNNKDRKLSFYPFPLHDKERLEKWLKNMKRDSWVPSKYQFLCSDHFTPDSLDIRWGIRYLKQTAVPTIFSLPEDNQGKDPSKKKSQKKNLEDEKEVCPKAKSEESFVLNETKKNIVNTNVPPQHPELLHSSSLVKPPAPKTGSIQNNMLTVNLVKQHTGKPESTLETSVYQDTGIGDFHTCFEDLNSTTITLTTSNSESIHQSLETQDVLEVTTNHLANPDFTSNSMEIKSAQENPFLFSTINQTVEELNTSKESVIAIFVPAENSKPSVNSFISTQKETMEMEDIDIEDSLYKDVDYGTEVLQIEHSYCRQDINKEHLWQKVFKLHSKITLLELKEQQTLGRLKSLEALVRQLKQENWLSEENVKIIENHFTTYEVTMI</sequence>
<proteinExistence type="evidence at transcript level"/>